<name>MS116_LODEL</name>
<protein>
    <recommendedName>
        <fullName>ATP-dependent RNA helicase MSS116, mitochondrial</fullName>
        <ecNumber>3.6.4.13</ecNumber>
    </recommendedName>
</protein>
<feature type="transit peptide" description="Mitochondrion" evidence="2">
    <location>
        <begin position="1"/>
        <end position="37"/>
    </location>
</feature>
<feature type="chain" id="PRO_0000294629" description="ATP-dependent RNA helicase MSS116, mitochondrial">
    <location>
        <begin position="38"/>
        <end position="692"/>
    </location>
</feature>
<feature type="domain" description="Helicase ATP-binding" evidence="3">
    <location>
        <begin position="162"/>
        <end position="349"/>
    </location>
</feature>
<feature type="domain" description="Helicase C-terminal" evidence="4">
    <location>
        <begin position="384"/>
        <end position="534"/>
    </location>
</feature>
<feature type="region of interest" description="Disordered" evidence="5">
    <location>
        <begin position="82"/>
        <end position="113"/>
    </location>
</feature>
<feature type="region of interest" description="Disordered" evidence="5">
    <location>
        <begin position="643"/>
        <end position="692"/>
    </location>
</feature>
<feature type="short sequence motif" description="Q motif">
    <location>
        <begin position="130"/>
        <end position="158"/>
    </location>
</feature>
<feature type="short sequence motif" description="DEAD box">
    <location>
        <begin position="290"/>
        <end position="293"/>
    </location>
</feature>
<feature type="compositionally biased region" description="Basic and acidic residues" evidence="5">
    <location>
        <begin position="89"/>
        <end position="99"/>
    </location>
</feature>
<feature type="compositionally biased region" description="Gly residues" evidence="5">
    <location>
        <begin position="661"/>
        <end position="670"/>
    </location>
</feature>
<feature type="binding site" evidence="3">
    <location>
        <begin position="175"/>
        <end position="182"/>
    </location>
    <ligand>
        <name>ATP</name>
        <dbReference type="ChEBI" id="CHEBI:30616"/>
    </ligand>
</feature>
<dbReference type="EC" id="3.6.4.13"/>
<dbReference type="EMBL" id="CH981524">
    <property type="protein sequence ID" value="EDK42515.1"/>
    <property type="molecule type" value="Genomic_DNA"/>
</dbReference>
<dbReference type="RefSeq" id="XP_001528173.1">
    <property type="nucleotide sequence ID" value="XM_001528123.1"/>
</dbReference>
<dbReference type="SMR" id="A5DTK7"/>
<dbReference type="FunCoup" id="A5DTK7">
    <property type="interactions" value="199"/>
</dbReference>
<dbReference type="STRING" id="379508.A5DTK7"/>
<dbReference type="GeneID" id="5235040"/>
<dbReference type="KEGG" id="lel:PVL30_000667"/>
<dbReference type="VEuPathDB" id="FungiDB:LELG_00693"/>
<dbReference type="eggNOG" id="KOG0342">
    <property type="taxonomic scope" value="Eukaryota"/>
</dbReference>
<dbReference type="HOGENOM" id="CLU_003041_26_6_1"/>
<dbReference type="InParanoid" id="A5DTK7"/>
<dbReference type="OMA" id="AHEKIDQ"/>
<dbReference type="OrthoDB" id="193716at2759"/>
<dbReference type="Proteomes" id="UP000001996">
    <property type="component" value="Unassembled WGS sequence"/>
</dbReference>
<dbReference type="GO" id="GO:0005759">
    <property type="term" value="C:mitochondrial matrix"/>
    <property type="evidence" value="ECO:0007669"/>
    <property type="project" value="UniProtKB-SubCell"/>
</dbReference>
<dbReference type="GO" id="GO:0005524">
    <property type="term" value="F:ATP binding"/>
    <property type="evidence" value="ECO:0007669"/>
    <property type="project" value="UniProtKB-KW"/>
</dbReference>
<dbReference type="GO" id="GO:0016887">
    <property type="term" value="F:ATP hydrolysis activity"/>
    <property type="evidence" value="ECO:0007669"/>
    <property type="project" value="RHEA"/>
</dbReference>
<dbReference type="GO" id="GO:0003723">
    <property type="term" value="F:RNA binding"/>
    <property type="evidence" value="ECO:0007669"/>
    <property type="project" value="UniProtKB-KW"/>
</dbReference>
<dbReference type="GO" id="GO:0003724">
    <property type="term" value="F:RNA helicase activity"/>
    <property type="evidence" value="ECO:0007669"/>
    <property type="project" value="UniProtKB-EC"/>
</dbReference>
<dbReference type="GO" id="GO:0006397">
    <property type="term" value="P:mRNA processing"/>
    <property type="evidence" value="ECO:0007669"/>
    <property type="project" value="UniProtKB-KW"/>
</dbReference>
<dbReference type="GO" id="GO:0006417">
    <property type="term" value="P:regulation of translation"/>
    <property type="evidence" value="ECO:0007669"/>
    <property type="project" value="UniProtKB-KW"/>
</dbReference>
<dbReference type="GO" id="GO:0008380">
    <property type="term" value="P:RNA splicing"/>
    <property type="evidence" value="ECO:0007669"/>
    <property type="project" value="UniProtKB-KW"/>
</dbReference>
<dbReference type="CDD" id="cd17964">
    <property type="entry name" value="DEADc_MSS116"/>
    <property type="match status" value="1"/>
</dbReference>
<dbReference type="CDD" id="cd18787">
    <property type="entry name" value="SF2_C_DEAD"/>
    <property type="match status" value="1"/>
</dbReference>
<dbReference type="Gene3D" id="3.40.50.300">
    <property type="entry name" value="P-loop containing nucleotide triphosphate hydrolases"/>
    <property type="match status" value="2"/>
</dbReference>
<dbReference type="InterPro" id="IPR011545">
    <property type="entry name" value="DEAD/DEAH_box_helicase_dom"/>
</dbReference>
<dbReference type="InterPro" id="IPR014001">
    <property type="entry name" value="Helicase_ATP-bd"/>
</dbReference>
<dbReference type="InterPro" id="IPR001650">
    <property type="entry name" value="Helicase_C-like"/>
</dbReference>
<dbReference type="InterPro" id="IPR027417">
    <property type="entry name" value="P-loop_NTPase"/>
</dbReference>
<dbReference type="PANTHER" id="PTHR24031">
    <property type="entry name" value="RNA HELICASE"/>
    <property type="match status" value="1"/>
</dbReference>
<dbReference type="Pfam" id="PF00270">
    <property type="entry name" value="DEAD"/>
    <property type="match status" value="1"/>
</dbReference>
<dbReference type="Pfam" id="PF00271">
    <property type="entry name" value="Helicase_C"/>
    <property type="match status" value="1"/>
</dbReference>
<dbReference type="SMART" id="SM00487">
    <property type="entry name" value="DEXDc"/>
    <property type="match status" value="1"/>
</dbReference>
<dbReference type="SMART" id="SM00490">
    <property type="entry name" value="HELICc"/>
    <property type="match status" value="1"/>
</dbReference>
<dbReference type="SUPFAM" id="SSF52540">
    <property type="entry name" value="P-loop containing nucleoside triphosphate hydrolases"/>
    <property type="match status" value="1"/>
</dbReference>
<dbReference type="PROSITE" id="PS51192">
    <property type="entry name" value="HELICASE_ATP_BIND_1"/>
    <property type="match status" value="1"/>
</dbReference>
<dbReference type="PROSITE" id="PS51194">
    <property type="entry name" value="HELICASE_CTER"/>
    <property type="match status" value="1"/>
</dbReference>
<dbReference type="PROSITE" id="PS51195">
    <property type="entry name" value="Q_MOTIF"/>
    <property type="match status" value="1"/>
</dbReference>
<sequence>MMIARFGKQVLRKNVLVSNRIHFPVISRGFHNSFINKSDDLKSPPIDITKGQTEAKVETKKDKFAGFGLDLDELIGETAKGSQVTEQTELTKSEEEEKKKKNINTNTNKNDRKSVPAISLEDFNPSQFKDFKNTGLIDDVILRALDRAHFKDLTPIQQKSIVPLLETERGMVCRAKTGTGKTLTFLIPTLQSAVSRKIASGGRSSGVDTVIIVPTRDLALQIYDEYQKVLRGISGSRKPHISYVIGGMKNSFNPRNPSEIVIATPGRLEADLRSPLFASAFTDIKYRVYDEADRLLDVGFEPTLDSIDRSIKMIRSDDAEPLKSLLFSATVDARLDQFAKQHINKKYDYINTVPEDDPEVHENIHQVMYKCKDAIDKFGSFFNYVNQLVKDSPDMKMMVFLPTQTAVEFLYSYMSEACHKHDVDIDIFHLHGKRSASQRQRALSNFKRDDSGILITTDVAARGIDVKGVTHVVQLFPSSEIADYVHKVGRTGRAGKEGKAVLFITQPEMAYVRRLNSERGVTFEQVHESSEIDNSIDFFEGMRPDEQVANDFFYTLMSFLAQISSTYRLRADDLVAENVSLYRAILQKPDAKLSLRAASALIKRLNRDVVREFFEQGRGGNNGGYGGYGGYGGSSYGRSGGSNRYSGGGGNRSEKRFSFAGRGGNSGGHSGRGRGGRSGYSGGRSSQYSDWE</sequence>
<organism>
    <name type="scientific">Lodderomyces elongisporus (strain ATCC 11503 / CBS 2605 / JCM 1781 / NBRC 1676 / NRRL YB-4239)</name>
    <name type="common">Yeast</name>
    <name type="synonym">Saccharomyces elongisporus</name>
    <dbReference type="NCBI Taxonomy" id="379508"/>
    <lineage>
        <taxon>Eukaryota</taxon>
        <taxon>Fungi</taxon>
        <taxon>Dikarya</taxon>
        <taxon>Ascomycota</taxon>
        <taxon>Saccharomycotina</taxon>
        <taxon>Pichiomycetes</taxon>
        <taxon>Debaryomycetaceae</taxon>
        <taxon>Candida/Lodderomyces clade</taxon>
        <taxon>Lodderomyces</taxon>
    </lineage>
</organism>
<proteinExistence type="inferred from homology"/>
<comment type="function">
    <text evidence="1">ATP-dependent RNA helicase required for mitochondrial splicing of group I and II introns. Also required for efficient mitochondrial translation (By similarity).</text>
</comment>
<comment type="catalytic activity">
    <reaction>
        <text>ATP + H2O = ADP + phosphate + H(+)</text>
        <dbReference type="Rhea" id="RHEA:13065"/>
        <dbReference type="ChEBI" id="CHEBI:15377"/>
        <dbReference type="ChEBI" id="CHEBI:15378"/>
        <dbReference type="ChEBI" id="CHEBI:30616"/>
        <dbReference type="ChEBI" id="CHEBI:43474"/>
        <dbReference type="ChEBI" id="CHEBI:456216"/>
        <dbReference type="EC" id="3.6.4.13"/>
    </reaction>
</comment>
<comment type="subcellular location">
    <subcellularLocation>
        <location evidence="1">Mitochondrion matrix</location>
    </subcellularLocation>
</comment>
<comment type="domain">
    <text>The Q motif is unique to and characteristic of the DEAD box family of RNA helicases and controls ATP binding and hydrolysis.</text>
</comment>
<comment type="similarity">
    <text evidence="6">Belongs to the DEAD box helicase family. DDX18/HAS1 subfamily.</text>
</comment>
<accession>A5DTK7</accession>
<keyword id="KW-0067">ATP-binding</keyword>
<keyword id="KW-0347">Helicase</keyword>
<keyword id="KW-0378">Hydrolase</keyword>
<keyword id="KW-0496">Mitochondrion</keyword>
<keyword id="KW-0507">mRNA processing</keyword>
<keyword id="KW-0508">mRNA splicing</keyword>
<keyword id="KW-0547">Nucleotide-binding</keyword>
<keyword id="KW-1185">Reference proteome</keyword>
<keyword id="KW-0694">RNA-binding</keyword>
<keyword id="KW-0809">Transit peptide</keyword>
<keyword id="KW-0810">Translation regulation</keyword>
<reference key="1">
    <citation type="journal article" date="2009" name="Nature">
        <title>Evolution of pathogenicity and sexual reproduction in eight Candida genomes.</title>
        <authorList>
            <person name="Butler G."/>
            <person name="Rasmussen M.D."/>
            <person name="Lin M.F."/>
            <person name="Santos M.A.S."/>
            <person name="Sakthikumar S."/>
            <person name="Munro C.A."/>
            <person name="Rheinbay E."/>
            <person name="Grabherr M."/>
            <person name="Forche A."/>
            <person name="Reedy J.L."/>
            <person name="Agrafioti I."/>
            <person name="Arnaud M.B."/>
            <person name="Bates S."/>
            <person name="Brown A.J.P."/>
            <person name="Brunke S."/>
            <person name="Costanzo M.C."/>
            <person name="Fitzpatrick D.A."/>
            <person name="de Groot P.W.J."/>
            <person name="Harris D."/>
            <person name="Hoyer L.L."/>
            <person name="Hube B."/>
            <person name="Klis F.M."/>
            <person name="Kodira C."/>
            <person name="Lennard N."/>
            <person name="Logue M.E."/>
            <person name="Martin R."/>
            <person name="Neiman A.M."/>
            <person name="Nikolaou E."/>
            <person name="Quail M.A."/>
            <person name="Quinn J."/>
            <person name="Santos M.C."/>
            <person name="Schmitzberger F.F."/>
            <person name="Sherlock G."/>
            <person name="Shah P."/>
            <person name="Silverstein K.A.T."/>
            <person name="Skrzypek M.S."/>
            <person name="Soll D."/>
            <person name="Staggs R."/>
            <person name="Stansfield I."/>
            <person name="Stumpf M.P.H."/>
            <person name="Sudbery P.E."/>
            <person name="Srikantha T."/>
            <person name="Zeng Q."/>
            <person name="Berman J."/>
            <person name="Berriman M."/>
            <person name="Heitman J."/>
            <person name="Gow N.A.R."/>
            <person name="Lorenz M.C."/>
            <person name="Birren B.W."/>
            <person name="Kellis M."/>
            <person name="Cuomo C.A."/>
        </authorList>
    </citation>
    <scope>NUCLEOTIDE SEQUENCE [LARGE SCALE GENOMIC DNA]</scope>
    <source>
        <strain>ATCC 11503 / BCRC 21390 / CBS 2605 / JCM 1781 / NBRC 1676 / NRRL YB-4239</strain>
    </source>
</reference>
<gene>
    <name type="primary">MSS116</name>
    <name type="ORF">LELG_00693</name>
</gene>
<evidence type="ECO:0000250" key="1"/>
<evidence type="ECO:0000255" key="2"/>
<evidence type="ECO:0000255" key="3">
    <source>
        <dbReference type="PROSITE-ProRule" id="PRU00541"/>
    </source>
</evidence>
<evidence type="ECO:0000255" key="4">
    <source>
        <dbReference type="PROSITE-ProRule" id="PRU00542"/>
    </source>
</evidence>
<evidence type="ECO:0000256" key="5">
    <source>
        <dbReference type="SAM" id="MobiDB-lite"/>
    </source>
</evidence>
<evidence type="ECO:0000305" key="6"/>